<name>SYP_PSELT</name>
<evidence type="ECO:0000255" key="1">
    <source>
        <dbReference type="HAMAP-Rule" id="MF_01569"/>
    </source>
</evidence>
<reference key="1">
    <citation type="submission" date="2007-08" db="EMBL/GenBank/DDBJ databases">
        <title>Complete sequence of Thermotoga lettingae TMO.</title>
        <authorList>
            <consortium name="US DOE Joint Genome Institute"/>
            <person name="Copeland A."/>
            <person name="Lucas S."/>
            <person name="Lapidus A."/>
            <person name="Barry K."/>
            <person name="Glavina del Rio T."/>
            <person name="Dalin E."/>
            <person name="Tice H."/>
            <person name="Pitluck S."/>
            <person name="Foster B."/>
            <person name="Bruce D."/>
            <person name="Schmutz J."/>
            <person name="Larimer F."/>
            <person name="Land M."/>
            <person name="Hauser L."/>
            <person name="Kyrpides N."/>
            <person name="Mikhailova N."/>
            <person name="Nelson K."/>
            <person name="Gogarten J.P."/>
            <person name="Noll K."/>
            <person name="Richardson P."/>
        </authorList>
    </citation>
    <scope>NUCLEOTIDE SEQUENCE [LARGE SCALE GENOMIC DNA]</scope>
    <source>
        <strain>ATCC BAA-301 / DSM 14385 / NBRC 107922 / TMO</strain>
    </source>
</reference>
<protein>
    <recommendedName>
        <fullName evidence="1">Proline--tRNA ligase</fullName>
        <ecNumber evidence="1">6.1.1.15</ecNumber>
    </recommendedName>
    <alternativeName>
        <fullName evidence="1">Prolyl-tRNA synthetase</fullName>
        <shortName evidence="1">ProRS</shortName>
    </alternativeName>
</protein>
<gene>
    <name evidence="1" type="primary">proS</name>
    <name type="ordered locus">Tlet_0246</name>
</gene>
<organism>
    <name type="scientific">Pseudothermotoga lettingae (strain ATCC BAA-301 / DSM 14385 / NBRC 107922 / TMO)</name>
    <name type="common">Thermotoga lettingae</name>
    <dbReference type="NCBI Taxonomy" id="416591"/>
    <lineage>
        <taxon>Bacteria</taxon>
        <taxon>Thermotogati</taxon>
        <taxon>Thermotogota</taxon>
        <taxon>Thermotogae</taxon>
        <taxon>Thermotogales</taxon>
        <taxon>Thermotogaceae</taxon>
        <taxon>Pseudothermotoga</taxon>
    </lineage>
</organism>
<proteinExistence type="inferred from homology"/>
<dbReference type="EC" id="6.1.1.15" evidence="1"/>
<dbReference type="EMBL" id="CP000812">
    <property type="protein sequence ID" value="ABV32816.1"/>
    <property type="molecule type" value="Genomic_DNA"/>
</dbReference>
<dbReference type="RefSeq" id="WP_012002297.1">
    <property type="nucleotide sequence ID" value="NZ_BSDV01000001.1"/>
</dbReference>
<dbReference type="SMR" id="A8F3T2"/>
<dbReference type="STRING" id="416591.Tlet_0246"/>
<dbReference type="KEGG" id="tle:Tlet_0246"/>
<dbReference type="eggNOG" id="COG0442">
    <property type="taxonomic scope" value="Bacteria"/>
</dbReference>
<dbReference type="HOGENOM" id="CLU_016739_0_0_0"/>
<dbReference type="OrthoDB" id="9809052at2"/>
<dbReference type="Proteomes" id="UP000002016">
    <property type="component" value="Chromosome"/>
</dbReference>
<dbReference type="GO" id="GO:0005829">
    <property type="term" value="C:cytosol"/>
    <property type="evidence" value="ECO:0007669"/>
    <property type="project" value="TreeGrafter"/>
</dbReference>
<dbReference type="GO" id="GO:0002161">
    <property type="term" value="F:aminoacyl-tRNA deacylase activity"/>
    <property type="evidence" value="ECO:0007669"/>
    <property type="project" value="InterPro"/>
</dbReference>
<dbReference type="GO" id="GO:0005524">
    <property type="term" value="F:ATP binding"/>
    <property type="evidence" value="ECO:0007669"/>
    <property type="project" value="UniProtKB-UniRule"/>
</dbReference>
<dbReference type="GO" id="GO:0004827">
    <property type="term" value="F:proline-tRNA ligase activity"/>
    <property type="evidence" value="ECO:0007669"/>
    <property type="project" value="UniProtKB-UniRule"/>
</dbReference>
<dbReference type="GO" id="GO:0006433">
    <property type="term" value="P:prolyl-tRNA aminoacylation"/>
    <property type="evidence" value="ECO:0007669"/>
    <property type="project" value="UniProtKB-UniRule"/>
</dbReference>
<dbReference type="CDD" id="cd04334">
    <property type="entry name" value="ProRS-INS"/>
    <property type="match status" value="1"/>
</dbReference>
<dbReference type="CDD" id="cd00861">
    <property type="entry name" value="ProRS_anticodon_short"/>
    <property type="match status" value="1"/>
</dbReference>
<dbReference type="CDD" id="cd00779">
    <property type="entry name" value="ProRS_core_prok"/>
    <property type="match status" value="1"/>
</dbReference>
<dbReference type="FunFam" id="3.30.930.10:FF:000066">
    <property type="entry name" value="Proline--tRNA ligase"/>
    <property type="match status" value="1"/>
</dbReference>
<dbReference type="Gene3D" id="3.40.50.800">
    <property type="entry name" value="Anticodon-binding domain"/>
    <property type="match status" value="1"/>
</dbReference>
<dbReference type="Gene3D" id="3.30.930.10">
    <property type="entry name" value="Bira Bifunctional Protein, Domain 2"/>
    <property type="match status" value="2"/>
</dbReference>
<dbReference type="HAMAP" id="MF_01569">
    <property type="entry name" value="Pro_tRNA_synth_type1"/>
    <property type="match status" value="1"/>
</dbReference>
<dbReference type="InterPro" id="IPR002314">
    <property type="entry name" value="aa-tRNA-synt_IIb"/>
</dbReference>
<dbReference type="InterPro" id="IPR006195">
    <property type="entry name" value="aa-tRNA-synth_II"/>
</dbReference>
<dbReference type="InterPro" id="IPR045864">
    <property type="entry name" value="aa-tRNA-synth_II/BPL/LPL"/>
</dbReference>
<dbReference type="InterPro" id="IPR004154">
    <property type="entry name" value="Anticodon-bd"/>
</dbReference>
<dbReference type="InterPro" id="IPR036621">
    <property type="entry name" value="Anticodon-bd_dom_sf"/>
</dbReference>
<dbReference type="InterPro" id="IPR002316">
    <property type="entry name" value="Pro-tRNA-ligase_IIa"/>
</dbReference>
<dbReference type="InterPro" id="IPR004500">
    <property type="entry name" value="Pro-tRNA-synth_IIa_bac-type"/>
</dbReference>
<dbReference type="InterPro" id="IPR023717">
    <property type="entry name" value="Pro-tRNA-Synthase_IIa_type1"/>
</dbReference>
<dbReference type="InterPro" id="IPR050062">
    <property type="entry name" value="Pro-tRNA_synthetase"/>
</dbReference>
<dbReference type="InterPro" id="IPR044140">
    <property type="entry name" value="ProRS_anticodon_short"/>
</dbReference>
<dbReference type="InterPro" id="IPR033730">
    <property type="entry name" value="ProRS_core_prok"/>
</dbReference>
<dbReference type="InterPro" id="IPR036754">
    <property type="entry name" value="YbaK/aa-tRNA-synt-asso_dom_sf"/>
</dbReference>
<dbReference type="InterPro" id="IPR007214">
    <property type="entry name" value="YbaK/aa-tRNA-synth-assoc-dom"/>
</dbReference>
<dbReference type="NCBIfam" id="NF006625">
    <property type="entry name" value="PRK09194.1"/>
    <property type="match status" value="1"/>
</dbReference>
<dbReference type="NCBIfam" id="TIGR00409">
    <property type="entry name" value="proS_fam_II"/>
    <property type="match status" value="1"/>
</dbReference>
<dbReference type="PANTHER" id="PTHR42753">
    <property type="entry name" value="MITOCHONDRIAL RIBOSOME PROTEIN L39/PROLYL-TRNA LIGASE FAMILY MEMBER"/>
    <property type="match status" value="1"/>
</dbReference>
<dbReference type="PANTHER" id="PTHR42753:SF2">
    <property type="entry name" value="PROLINE--TRNA LIGASE"/>
    <property type="match status" value="1"/>
</dbReference>
<dbReference type="Pfam" id="PF03129">
    <property type="entry name" value="HGTP_anticodon"/>
    <property type="match status" value="1"/>
</dbReference>
<dbReference type="Pfam" id="PF00587">
    <property type="entry name" value="tRNA-synt_2b"/>
    <property type="match status" value="1"/>
</dbReference>
<dbReference type="Pfam" id="PF04073">
    <property type="entry name" value="tRNA_edit"/>
    <property type="match status" value="1"/>
</dbReference>
<dbReference type="PRINTS" id="PR01046">
    <property type="entry name" value="TRNASYNTHPRO"/>
</dbReference>
<dbReference type="SUPFAM" id="SSF52954">
    <property type="entry name" value="Class II aaRS ABD-related"/>
    <property type="match status" value="1"/>
</dbReference>
<dbReference type="SUPFAM" id="SSF55681">
    <property type="entry name" value="Class II aaRS and biotin synthetases"/>
    <property type="match status" value="1"/>
</dbReference>
<dbReference type="SUPFAM" id="SSF55826">
    <property type="entry name" value="YbaK/ProRS associated domain"/>
    <property type="match status" value="1"/>
</dbReference>
<dbReference type="PROSITE" id="PS50862">
    <property type="entry name" value="AA_TRNA_LIGASE_II"/>
    <property type="match status" value="1"/>
</dbReference>
<keyword id="KW-0030">Aminoacyl-tRNA synthetase</keyword>
<keyword id="KW-0067">ATP-binding</keyword>
<keyword id="KW-0963">Cytoplasm</keyword>
<keyword id="KW-0436">Ligase</keyword>
<keyword id="KW-0547">Nucleotide-binding</keyword>
<keyword id="KW-0648">Protein biosynthesis</keyword>
<keyword id="KW-1185">Reference proteome</keyword>
<accession>A8F3T2</accession>
<feature type="chain" id="PRO_1000069169" description="Proline--tRNA ligase">
    <location>
        <begin position="1"/>
        <end position="575"/>
    </location>
</feature>
<sequence length="575" mass="65127">MKFSQLYAPTLKEAPADAEVISHALLYRAGFIRKIAAGVYSYLPLAKRTLSKIEAIVRKEMNEIGAQEVSMPVIQPAELWKTTGRWDDYGPEMMKLKDRHERDFTLGPTHEEVFTHMVKDELRSYKQLPLFLYQIGPKYRDEIRPRFGLLRAREFIMKDGYSFHDSDQSLNETYEACKNAYRKITEKIGLKYIIIEAASGAIGGNESHEFVSFAPVGETNLLKCEKCGYSSNDEQAPYRGKYHRDEEIEKPVELIHTPNVRSVEQVAEFLNVSKNKIVKSLLFIGRNGFVMALIQGDRELNIEKLKVHVNDQSLRLAEPDEVLQAFRVPIGFIGPVGIEKVHVVADCGIKYMKNVVVGGMKKDYHYINANVGRDFSPDSYTDLRVVQPNDPCPVCGEQLTGSKGIEIAQIFKLGTKYSKAMNALYMDDKGEVKPFIMGCYGWGISRTMAAIVEQLHDEDGILWPRSVAPFELIITVVSAQDQDQRIFAQKLYNSLLSSEIDVLLDDRDISPGMKFKDADLIGFPLRITVGKSLKEGMVELKSRNSSKSIKVSAELSKINSVLFKMLEEYNPHERV</sequence>
<comment type="function">
    <text evidence="1">Catalyzes the attachment of proline to tRNA(Pro) in a two-step reaction: proline is first activated by ATP to form Pro-AMP and then transferred to the acceptor end of tRNA(Pro). As ProRS can inadvertently accommodate and process non-cognate amino acids such as alanine and cysteine, to avoid such errors it has two additional distinct editing activities against alanine. One activity is designated as 'pretransfer' editing and involves the tRNA(Pro)-independent hydrolysis of activated Ala-AMP. The other activity is designated 'posttransfer' editing and involves deacylation of mischarged Ala-tRNA(Pro). The misacylated Cys-tRNA(Pro) is not edited by ProRS.</text>
</comment>
<comment type="catalytic activity">
    <reaction evidence="1">
        <text>tRNA(Pro) + L-proline + ATP = L-prolyl-tRNA(Pro) + AMP + diphosphate</text>
        <dbReference type="Rhea" id="RHEA:14305"/>
        <dbReference type="Rhea" id="RHEA-COMP:9700"/>
        <dbReference type="Rhea" id="RHEA-COMP:9702"/>
        <dbReference type="ChEBI" id="CHEBI:30616"/>
        <dbReference type="ChEBI" id="CHEBI:33019"/>
        <dbReference type="ChEBI" id="CHEBI:60039"/>
        <dbReference type="ChEBI" id="CHEBI:78442"/>
        <dbReference type="ChEBI" id="CHEBI:78532"/>
        <dbReference type="ChEBI" id="CHEBI:456215"/>
        <dbReference type="EC" id="6.1.1.15"/>
    </reaction>
</comment>
<comment type="subunit">
    <text evidence="1">Homodimer.</text>
</comment>
<comment type="subcellular location">
    <subcellularLocation>
        <location evidence="1">Cytoplasm</location>
    </subcellularLocation>
</comment>
<comment type="domain">
    <text evidence="1">Consists of three domains: the N-terminal catalytic domain, the editing domain and the C-terminal anticodon-binding domain.</text>
</comment>
<comment type="similarity">
    <text evidence="1">Belongs to the class-II aminoacyl-tRNA synthetase family. ProS type 1 subfamily.</text>
</comment>